<comment type="function">
    <text evidence="2 3 4 5">Positive regulatory subunit of the cyclin-dependent kinases CDK14/PFTK1 and CDK16. Acts as a cell-cycle regulator of Wnt signaling pathway during G2/M phase by recruiting CDK14/PFTK1 to the plasma membrane and promoting phosphorylation of LRP6, leading to the activation of the Wnt signaling pathway. Recruits CDK16 to the plasma membrane. Isoform 3 might play a role in the activation of MYC-mediated transcription.</text>
</comment>
<comment type="subunit">
    <text evidence="3 4 5 7">Found in a complex with CAPRIN2, LRP6 and CDK14 during G2/M stage; CAPRIN2 functions as a scaffold for the complex by binding to CCNY via its N terminus and to CDK14 via its C terminus (PubMed:27821587). Interacts with CDK14 (PubMed:19524571, PubMed:20059949). Interacts with CDK16 (PubMed:22184064). Interacts with LRP6 (PubMed:20059949).</text>
</comment>
<comment type="interaction">
    <interactant intactId="EBI-1049189">
        <id>Q8ND76</id>
    </interactant>
    <interactant intactId="EBI-1043945">
        <id>O94921</id>
        <label>CDK14</label>
    </interactant>
    <organismsDiffer>false</organismsDiffer>
    <experiments>7</experiments>
</comment>
<comment type="interaction">
    <interactant intactId="EBI-1049189">
        <id>Q8ND76</id>
    </interactant>
    <interactant intactId="EBI-726261">
        <id>Q00536</id>
        <label>CDK16</label>
    </interactant>
    <organismsDiffer>false</organismsDiffer>
    <experiments>3</experiments>
</comment>
<comment type="interaction">
    <interactant intactId="EBI-1049189">
        <id>Q8ND76</id>
    </interactant>
    <interactant intactId="EBI-359390">
        <id>Q13616</id>
        <label>CUL1</label>
    </interactant>
    <organismsDiffer>false</organismsDiffer>
    <experiments>3</experiments>
</comment>
<comment type="interaction">
    <interactant intactId="EBI-1049189">
        <id>Q8ND76</id>
    </interactant>
    <interactant intactId="EBI-306940">
        <id>Q04917</id>
        <label>YWHAH</label>
    </interactant>
    <organismsDiffer>false</organismsDiffer>
    <experiments>2</experiments>
</comment>
<comment type="interaction">
    <interactant intactId="EBI-11615526">
        <id>Q8ND76-1</id>
    </interactant>
    <interactant intactId="EBI-726261">
        <id>Q00536</id>
        <label>CDK16</label>
    </interactant>
    <organismsDiffer>false</organismsDiffer>
    <experiments>7</experiments>
</comment>
<comment type="subcellular location">
    <subcellularLocation>
        <location evidence="2 3 4 5">Cell membrane</location>
        <topology evidence="2 3 4 5">Lipid-anchor</topology>
        <orientation evidence="2 3 4 5">Cytoplasmic side</orientation>
    </subcellularLocation>
</comment>
<comment type="subcellular location">
    <molecule>Isoform 3</molecule>
    <subcellularLocation>
        <location>Nucleus</location>
    </subcellularLocation>
</comment>
<comment type="alternative products">
    <event type="alternative splicing"/>
    <isoform>
        <id>Q8ND76-1</id>
        <name>1</name>
        <name>b</name>
        <sequence type="displayed"/>
    </isoform>
    <isoform>
        <id>Q8ND76-2</id>
        <name>2</name>
        <name>a</name>
        <sequence type="described" ref="VSP_014834"/>
    </isoform>
    <isoform>
        <id>Q8ND76-3</id>
        <name>3</name>
        <sequence type="described" ref="VSP_014833"/>
    </isoform>
</comment>
<comment type="tissue specificity">
    <text evidence="2">Widely expressed.</text>
</comment>
<comment type="developmental stage">
    <text evidence="4">Enriched at G2/M.</text>
</comment>
<comment type="PTM">
    <text evidence="4 6">Ubiquitinated; leading to its degradation.</text>
</comment>
<comment type="PTM">
    <text evidence="6">Heavily phosphorylated. Phosphorylation at Ser-71 and Ser-73 by CDK14 is enhanced during the G2 and M cell cycle phases, and creates a phosphodegron triggering SCF-dependent ubiquitination.</text>
</comment>
<comment type="similarity">
    <text evidence="12">Belongs to the cyclin family. Cyclin Y subfamily.</text>
</comment>
<comment type="sequence caution" evidence="12">
    <conflict type="erroneous initiation">
        <sequence resource="EMBL-CDS" id="AAH69224"/>
    </conflict>
</comment>
<proteinExistence type="evidence at protein level"/>
<keyword id="KW-0025">Alternative splicing</keyword>
<keyword id="KW-0131">Cell cycle</keyword>
<keyword id="KW-0132">Cell division</keyword>
<keyword id="KW-1003">Cell membrane</keyword>
<keyword id="KW-0195">Cyclin</keyword>
<keyword id="KW-0449">Lipoprotein</keyword>
<keyword id="KW-0472">Membrane</keyword>
<keyword id="KW-0519">Myristate</keyword>
<keyword id="KW-0539">Nucleus</keyword>
<keyword id="KW-0597">Phosphoprotein</keyword>
<keyword id="KW-1267">Proteomics identification</keyword>
<keyword id="KW-1185">Reference proteome</keyword>
<keyword id="KW-0832">Ubl conjugation</keyword>
<keyword id="KW-0879">Wnt signaling pathway</keyword>
<evidence type="ECO:0000250" key="1">
    <source>
        <dbReference type="UniProtKB" id="Q8BGU5"/>
    </source>
</evidence>
<evidence type="ECO:0000269" key="2">
    <source>
    </source>
</evidence>
<evidence type="ECO:0000269" key="3">
    <source>
    </source>
</evidence>
<evidence type="ECO:0000269" key="4">
    <source>
    </source>
</evidence>
<evidence type="ECO:0000269" key="5">
    <source>
    </source>
</evidence>
<evidence type="ECO:0000269" key="6">
    <source>
    </source>
</evidence>
<evidence type="ECO:0000269" key="7">
    <source>
    </source>
</evidence>
<evidence type="ECO:0000303" key="8">
    <source>
    </source>
</evidence>
<evidence type="ECO:0000303" key="9">
    <source>
    </source>
</evidence>
<evidence type="ECO:0000303" key="10">
    <source>
    </source>
</evidence>
<evidence type="ECO:0000303" key="11">
    <source ref="4"/>
</evidence>
<evidence type="ECO:0000305" key="12"/>
<evidence type="ECO:0007744" key="13">
    <source>
    </source>
</evidence>
<evidence type="ECO:0007744" key="14">
    <source>
    </source>
</evidence>
<evidence type="ECO:0007744" key="15">
    <source>
    </source>
</evidence>
<evidence type="ECO:0007744" key="16">
    <source>
    </source>
</evidence>
<organism>
    <name type="scientific">Homo sapiens</name>
    <name type="common">Human</name>
    <dbReference type="NCBI Taxonomy" id="9606"/>
    <lineage>
        <taxon>Eukaryota</taxon>
        <taxon>Metazoa</taxon>
        <taxon>Chordata</taxon>
        <taxon>Craniata</taxon>
        <taxon>Vertebrata</taxon>
        <taxon>Euteleostomi</taxon>
        <taxon>Mammalia</taxon>
        <taxon>Eutheria</taxon>
        <taxon>Euarchontoglires</taxon>
        <taxon>Primates</taxon>
        <taxon>Haplorrhini</taxon>
        <taxon>Catarrhini</taxon>
        <taxon>Hominidae</taxon>
        <taxon>Homo</taxon>
    </lineage>
</organism>
<dbReference type="EMBL" id="AY504868">
    <property type="protein sequence ID" value="AAS79427.1"/>
    <property type="molecule type" value="mRNA"/>
</dbReference>
<dbReference type="EMBL" id="AF429969">
    <property type="protein sequence ID" value="AAP97301.1"/>
    <property type="molecule type" value="mRNA"/>
</dbReference>
<dbReference type="EMBL" id="AF413522">
    <property type="protein sequence ID" value="AAL07802.1"/>
    <property type="molecule type" value="mRNA"/>
</dbReference>
<dbReference type="EMBL" id="AF465728">
    <property type="protein sequence ID" value="AAL78998.1"/>
    <property type="molecule type" value="mRNA"/>
</dbReference>
<dbReference type="EMBL" id="AF465729">
    <property type="protein sequence ID" value="AAL78999.1"/>
    <property type="molecule type" value="mRNA"/>
</dbReference>
<dbReference type="EMBL" id="AK057280">
    <property type="protein sequence ID" value="BAB71409.1"/>
    <property type="molecule type" value="mRNA"/>
</dbReference>
<dbReference type="EMBL" id="AL834355">
    <property type="protein sequence ID" value="CAD39020.2"/>
    <property type="molecule type" value="mRNA"/>
</dbReference>
<dbReference type="EMBL" id="AL592445">
    <property type="status" value="NOT_ANNOTATED_CDS"/>
    <property type="molecule type" value="Genomic_DNA"/>
</dbReference>
<dbReference type="EMBL" id="AL603824">
    <property type="status" value="NOT_ANNOTATED_CDS"/>
    <property type="molecule type" value="Genomic_DNA"/>
</dbReference>
<dbReference type="EMBL" id="AL117336">
    <property type="status" value="NOT_ANNOTATED_CDS"/>
    <property type="molecule type" value="Genomic_DNA"/>
</dbReference>
<dbReference type="EMBL" id="AL121749">
    <property type="status" value="NOT_ANNOTATED_CDS"/>
    <property type="molecule type" value="Genomic_DNA"/>
</dbReference>
<dbReference type="EMBL" id="CH471072">
    <property type="protein sequence ID" value="EAW85912.1"/>
    <property type="molecule type" value="Genomic_DNA"/>
</dbReference>
<dbReference type="EMBL" id="CH471072">
    <property type="protein sequence ID" value="EAW85913.1"/>
    <property type="molecule type" value="Genomic_DNA"/>
</dbReference>
<dbReference type="EMBL" id="CH471072">
    <property type="protein sequence ID" value="EAW85914.1"/>
    <property type="molecule type" value="Genomic_DNA"/>
</dbReference>
<dbReference type="EMBL" id="BC069224">
    <property type="protein sequence ID" value="AAH69224.1"/>
    <property type="status" value="ALT_INIT"/>
    <property type="molecule type" value="mRNA"/>
</dbReference>
<dbReference type="EMBL" id="BC094815">
    <property type="protein sequence ID" value="AAH94815.1"/>
    <property type="molecule type" value="mRNA"/>
</dbReference>
<dbReference type="EMBL" id="BC104773">
    <property type="protein sequence ID" value="AAI04774.1"/>
    <property type="molecule type" value="mRNA"/>
</dbReference>
<dbReference type="EMBL" id="BC104801">
    <property type="protein sequence ID" value="AAI04802.1"/>
    <property type="molecule type" value="mRNA"/>
</dbReference>
<dbReference type="EMBL" id="BC143450">
    <property type="protein sequence ID" value="AAI43451.1"/>
    <property type="molecule type" value="mRNA"/>
</dbReference>
<dbReference type="EMBL" id="BC143455">
    <property type="protein sequence ID" value="AAI43456.1"/>
    <property type="molecule type" value="mRNA"/>
</dbReference>
<dbReference type="CCDS" id="CCDS60513.1">
    <molecule id="Q8ND76-2"/>
</dbReference>
<dbReference type="CCDS" id="CCDS7189.1">
    <molecule id="Q8ND76-1"/>
</dbReference>
<dbReference type="CCDS" id="CCDS7190.1">
    <molecule id="Q8ND76-3"/>
</dbReference>
<dbReference type="RefSeq" id="NP_001269781.1">
    <molecule id="Q8ND76-2"/>
    <property type="nucleotide sequence ID" value="NM_001282852.2"/>
</dbReference>
<dbReference type="RefSeq" id="NP_001269782.1">
    <molecule id="Q8ND76-3"/>
    <property type="nucleotide sequence ID" value="NM_001282853.2"/>
</dbReference>
<dbReference type="RefSeq" id="NP_001269783.1">
    <property type="nucleotide sequence ID" value="NM_001282854.1"/>
</dbReference>
<dbReference type="RefSeq" id="NP_659449.3">
    <molecule id="Q8ND76-1"/>
    <property type="nucleotide sequence ID" value="NM_145012.5"/>
</dbReference>
<dbReference type="RefSeq" id="NP_859049.2">
    <molecule id="Q8ND76-3"/>
    <property type="nucleotide sequence ID" value="NM_181698.4"/>
</dbReference>
<dbReference type="RefSeq" id="XP_011517660.1">
    <property type="nucleotide sequence ID" value="XM_011519358.1"/>
</dbReference>
<dbReference type="RefSeq" id="XP_011517662.1">
    <property type="nucleotide sequence ID" value="XM_011519360.2"/>
</dbReference>
<dbReference type="RefSeq" id="XP_011517663.1">
    <property type="nucleotide sequence ID" value="XM_011519361.1"/>
</dbReference>
<dbReference type="RefSeq" id="XP_011517664.1">
    <property type="nucleotide sequence ID" value="XM_011519362.1"/>
</dbReference>
<dbReference type="RefSeq" id="XP_011517665.1">
    <property type="nucleotide sequence ID" value="XM_011519363.1"/>
</dbReference>
<dbReference type="RefSeq" id="XP_011517666.1">
    <property type="nucleotide sequence ID" value="XM_011519364.1"/>
</dbReference>
<dbReference type="RefSeq" id="XP_011517667.1">
    <property type="nucleotide sequence ID" value="XM_011519365.2"/>
</dbReference>
<dbReference type="RefSeq" id="XP_011517668.1">
    <property type="nucleotide sequence ID" value="XM_011519366.1"/>
</dbReference>
<dbReference type="RefSeq" id="XP_011517669.1">
    <property type="nucleotide sequence ID" value="XM_011519367.1"/>
</dbReference>
<dbReference type="RefSeq" id="XP_011517670.1">
    <property type="nucleotide sequence ID" value="XM_011519368.2"/>
</dbReference>
<dbReference type="RefSeq" id="XP_016871328.1">
    <property type="nucleotide sequence ID" value="XM_017015839.1"/>
</dbReference>
<dbReference type="RefSeq" id="XP_016871329.1">
    <property type="nucleotide sequence ID" value="XM_017015840.1"/>
</dbReference>
<dbReference type="RefSeq" id="XP_016871330.1">
    <property type="nucleotide sequence ID" value="XM_017015841.1"/>
</dbReference>
<dbReference type="SMR" id="Q8ND76"/>
<dbReference type="BioGRID" id="128575">
    <property type="interactions" value="54"/>
</dbReference>
<dbReference type="ComplexPortal" id="CPX-364">
    <property type="entry name" value="Cyclin Y-CDK14 complex"/>
</dbReference>
<dbReference type="ComplexPortal" id="CPX-379">
    <property type="entry name" value="Cyclin Y-CDK16 complex"/>
</dbReference>
<dbReference type="ELM" id="Q8ND76"/>
<dbReference type="FunCoup" id="Q8ND76">
    <property type="interactions" value="2898"/>
</dbReference>
<dbReference type="IntAct" id="Q8ND76">
    <property type="interactions" value="35"/>
</dbReference>
<dbReference type="MINT" id="Q8ND76"/>
<dbReference type="STRING" id="9606.ENSP00000363836"/>
<dbReference type="BindingDB" id="Q8ND76"/>
<dbReference type="ChEMBL" id="CHEMBL3885550"/>
<dbReference type="ChEMBL" id="CHEMBL4106161"/>
<dbReference type="ChEMBL" id="CHEMBL4296115"/>
<dbReference type="ChEMBL" id="CHEMBL4523634"/>
<dbReference type="ChEMBL" id="CHEMBL4523637"/>
<dbReference type="ChEMBL" id="CHEMBL5483184"/>
<dbReference type="iPTMnet" id="Q8ND76"/>
<dbReference type="PhosphoSitePlus" id="Q8ND76"/>
<dbReference type="SwissPalm" id="Q8ND76"/>
<dbReference type="BioMuta" id="CCNY"/>
<dbReference type="DMDM" id="71658801"/>
<dbReference type="jPOST" id="Q8ND76"/>
<dbReference type="MassIVE" id="Q8ND76"/>
<dbReference type="PaxDb" id="9606-ENSP00000363836"/>
<dbReference type="PeptideAtlas" id="Q8ND76"/>
<dbReference type="ProteomicsDB" id="72984">
    <molecule id="Q8ND76-1"/>
</dbReference>
<dbReference type="ProteomicsDB" id="72985">
    <molecule id="Q8ND76-2"/>
</dbReference>
<dbReference type="ProteomicsDB" id="72986">
    <molecule id="Q8ND76-3"/>
</dbReference>
<dbReference type="Pumba" id="Q8ND76"/>
<dbReference type="Antibodypedia" id="26676">
    <property type="antibodies" value="211 antibodies from 28 providers"/>
</dbReference>
<dbReference type="DNASU" id="219771"/>
<dbReference type="Ensembl" id="ENST00000265375.13">
    <molecule id="Q8ND76-3"/>
    <property type="protein sequence ID" value="ENSP00000265375.9"/>
    <property type="gene ID" value="ENSG00000108100.18"/>
</dbReference>
<dbReference type="Ensembl" id="ENST00000339497.7">
    <molecule id="Q8ND76-2"/>
    <property type="protein sequence ID" value="ENSP00000344275.5"/>
    <property type="gene ID" value="ENSG00000108100.18"/>
</dbReference>
<dbReference type="Ensembl" id="ENST00000374704.8">
    <molecule id="Q8ND76-1"/>
    <property type="protein sequence ID" value="ENSP00000363836.4"/>
    <property type="gene ID" value="ENSG00000108100.18"/>
</dbReference>
<dbReference type="Ensembl" id="ENST00000374706.5">
    <molecule id="Q8ND76-3"/>
    <property type="protein sequence ID" value="ENSP00000363838.1"/>
    <property type="gene ID" value="ENSG00000108100.18"/>
</dbReference>
<dbReference type="GeneID" id="219771"/>
<dbReference type="KEGG" id="hsa:219771"/>
<dbReference type="MANE-Select" id="ENST00000374704.8">
    <property type="protein sequence ID" value="ENSP00000363836.4"/>
    <property type="RefSeq nucleotide sequence ID" value="NM_145012.6"/>
    <property type="RefSeq protein sequence ID" value="NP_659449.3"/>
</dbReference>
<dbReference type="UCSC" id="uc001iyu.6">
    <molecule id="Q8ND76-1"/>
    <property type="organism name" value="human"/>
</dbReference>
<dbReference type="AGR" id="HGNC:23354"/>
<dbReference type="CTD" id="219771"/>
<dbReference type="DisGeNET" id="219771"/>
<dbReference type="GeneCards" id="CCNY"/>
<dbReference type="HGNC" id="HGNC:23354">
    <property type="gene designation" value="CCNY"/>
</dbReference>
<dbReference type="HPA" id="ENSG00000108100">
    <property type="expression patterns" value="Low tissue specificity"/>
</dbReference>
<dbReference type="MIM" id="612786">
    <property type="type" value="gene"/>
</dbReference>
<dbReference type="neXtProt" id="NX_Q8ND76"/>
<dbReference type="OpenTargets" id="ENSG00000108100"/>
<dbReference type="PharmGKB" id="PA162381980"/>
<dbReference type="VEuPathDB" id="HostDB:ENSG00000108100"/>
<dbReference type="eggNOG" id="KOG1675">
    <property type="taxonomic scope" value="Eukaryota"/>
</dbReference>
<dbReference type="GeneTree" id="ENSGT00940000154453"/>
<dbReference type="HOGENOM" id="CLU_055026_0_0_1"/>
<dbReference type="InParanoid" id="Q8ND76"/>
<dbReference type="OMA" id="KNRAHER"/>
<dbReference type="OrthoDB" id="10250320at2759"/>
<dbReference type="PAN-GO" id="Q8ND76">
    <property type="GO annotations" value="5 GO annotations based on evolutionary models"/>
</dbReference>
<dbReference type="PhylomeDB" id="Q8ND76"/>
<dbReference type="TreeFam" id="TF314464"/>
<dbReference type="PathwayCommons" id="Q8ND76"/>
<dbReference type="SignaLink" id="Q8ND76"/>
<dbReference type="SIGNOR" id="Q8ND76"/>
<dbReference type="BioGRID-ORCS" id="219771">
    <property type="hits" value="10 hits in 1161 CRISPR screens"/>
</dbReference>
<dbReference type="CD-CODE" id="FB4E32DD">
    <property type="entry name" value="Presynaptic clusters and postsynaptic densities"/>
</dbReference>
<dbReference type="ChiTaRS" id="CCNY">
    <property type="organism name" value="human"/>
</dbReference>
<dbReference type="GeneWiki" id="CCNY_(gene)"/>
<dbReference type="GenomeRNAi" id="219771"/>
<dbReference type="Pharos" id="Q8ND76">
    <property type="development level" value="Tbio"/>
</dbReference>
<dbReference type="PRO" id="PR:Q8ND76"/>
<dbReference type="Proteomes" id="UP000005640">
    <property type="component" value="Chromosome 10"/>
</dbReference>
<dbReference type="RNAct" id="Q8ND76">
    <property type="molecule type" value="protein"/>
</dbReference>
<dbReference type="Bgee" id="ENSG00000108100">
    <property type="expression patterns" value="Expressed in sperm and 188 other cell types or tissues"/>
</dbReference>
<dbReference type="ExpressionAtlas" id="Q8ND76">
    <property type="expression patterns" value="baseline and differential"/>
</dbReference>
<dbReference type="GO" id="GO:0000307">
    <property type="term" value="C:cyclin-dependent protein kinase holoenzyme complex"/>
    <property type="evidence" value="ECO:0000353"/>
    <property type="project" value="ComplexPortal"/>
</dbReference>
<dbReference type="GO" id="GO:0000308">
    <property type="term" value="C:cytoplasmic cyclin-dependent protein kinase holoenzyme complex"/>
    <property type="evidence" value="ECO:0000314"/>
    <property type="project" value="UniProtKB"/>
</dbReference>
<dbReference type="GO" id="GO:0005730">
    <property type="term" value="C:nucleolus"/>
    <property type="evidence" value="ECO:0000314"/>
    <property type="project" value="HPA"/>
</dbReference>
<dbReference type="GO" id="GO:0005654">
    <property type="term" value="C:nucleoplasm"/>
    <property type="evidence" value="ECO:0000314"/>
    <property type="project" value="HPA"/>
</dbReference>
<dbReference type="GO" id="GO:0005634">
    <property type="term" value="C:nucleus"/>
    <property type="evidence" value="ECO:0000314"/>
    <property type="project" value="LIFEdb"/>
</dbReference>
<dbReference type="GO" id="GO:0005886">
    <property type="term" value="C:plasma membrane"/>
    <property type="evidence" value="ECO:0000314"/>
    <property type="project" value="UniProtKB"/>
</dbReference>
<dbReference type="GO" id="GO:0016538">
    <property type="term" value="F:cyclin-dependent protein serine/threonine kinase regulator activity"/>
    <property type="evidence" value="ECO:0000314"/>
    <property type="project" value="UniProtKB"/>
</dbReference>
<dbReference type="GO" id="GO:0019901">
    <property type="term" value="F:protein kinase binding"/>
    <property type="evidence" value="ECO:0007669"/>
    <property type="project" value="InterPro"/>
</dbReference>
<dbReference type="GO" id="GO:0051301">
    <property type="term" value="P:cell division"/>
    <property type="evidence" value="ECO:0007669"/>
    <property type="project" value="UniProtKB-KW"/>
</dbReference>
<dbReference type="GO" id="GO:0000086">
    <property type="term" value="P:G2/M transition of mitotic cell cycle"/>
    <property type="evidence" value="ECO:0000314"/>
    <property type="project" value="UniProtKB"/>
</dbReference>
<dbReference type="GO" id="GO:0010508">
    <property type="term" value="P:positive regulation of autophagy"/>
    <property type="evidence" value="ECO:0000314"/>
    <property type="project" value="ComplexPortal"/>
</dbReference>
<dbReference type="GO" id="GO:0045737">
    <property type="term" value="P:positive regulation of cyclin-dependent protein serine/threonine kinase activity"/>
    <property type="evidence" value="ECO:0000314"/>
    <property type="project" value="UniProtKB"/>
</dbReference>
<dbReference type="GO" id="GO:0060828">
    <property type="term" value="P:regulation of canonical Wnt signaling pathway"/>
    <property type="evidence" value="ECO:0000314"/>
    <property type="project" value="UniProtKB"/>
</dbReference>
<dbReference type="GO" id="GO:0007283">
    <property type="term" value="P:spermatogenesis"/>
    <property type="evidence" value="ECO:0000303"/>
    <property type="project" value="ComplexPortal"/>
</dbReference>
<dbReference type="GO" id="GO:0016055">
    <property type="term" value="P:Wnt signaling pathway"/>
    <property type="evidence" value="ECO:0007669"/>
    <property type="project" value="UniProtKB-KW"/>
</dbReference>
<dbReference type="CDD" id="cd20540">
    <property type="entry name" value="CYCLIN_CCNY_like"/>
    <property type="match status" value="1"/>
</dbReference>
<dbReference type="FunFam" id="1.10.472.10:FF:000011">
    <property type="entry name" value="Cyclin-Y isoform 1"/>
    <property type="match status" value="1"/>
</dbReference>
<dbReference type="Gene3D" id="1.10.472.10">
    <property type="entry name" value="Cyclin-like"/>
    <property type="match status" value="1"/>
</dbReference>
<dbReference type="InterPro" id="IPR013763">
    <property type="entry name" value="Cyclin-like_dom"/>
</dbReference>
<dbReference type="InterPro" id="IPR036915">
    <property type="entry name" value="Cyclin-like_sf"/>
</dbReference>
<dbReference type="InterPro" id="IPR006671">
    <property type="entry name" value="Cyclin_N"/>
</dbReference>
<dbReference type="InterPro" id="IPR012399">
    <property type="entry name" value="Cyclin_Y"/>
</dbReference>
<dbReference type="PANTHER" id="PTHR14248">
    <property type="entry name" value="CYCLIN Y, ISOFORM A"/>
    <property type="match status" value="1"/>
</dbReference>
<dbReference type="Pfam" id="PF00134">
    <property type="entry name" value="Cyclin_N"/>
    <property type="match status" value="1"/>
</dbReference>
<dbReference type="PIRSF" id="PIRSF028934">
    <property type="entry name" value="Cyclin_CG14939"/>
    <property type="match status" value="1"/>
</dbReference>
<dbReference type="SMART" id="SM00385">
    <property type="entry name" value="CYCLIN"/>
    <property type="match status" value="1"/>
</dbReference>
<dbReference type="SUPFAM" id="SSF47954">
    <property type="entry name" value="Cyclin-like"/>
    <property type="match status" value="1"/>
</dbReference>
<protein>
    <recommendedName>
        <fullName>Cyclin-Y</fullName>
        <shortName>Cyc-Y</shortName>
    </recommendedName>
    <alternativeName>
        <fullName>Cyclin box protein 1</fullName>
    </alternativeName>
    <alternativeName>
        <fullName>Cyclin fold protein 1</fullName>
    </alternativeName>
    <alternativeName>
        <fullName>cyclin-X</fullName>
    </alternativeName>
</protein>
<feature type="initiator methionine" description="Removed">
    <location>
        <position position="1"/>
    </location>
</feature>
<feature type="chain" id="PRO_0000080514" description="Cyclin-Y">
    <location>
        <begin position="2"/>
        <end position="341"/>
    </location>
</feature>
<feature type="domain" description="Cyclin N-terminal">
    <location>
        <begin position="143"/>
        <end position="265"/>
    </location>
</feature>
<feature type="modified residue" description="Phosphoserine" evidence="15">
    <location>
        <position position="21"/>
    </location>
</feature>
<feature type="modified residue" description="Phosphoserine" evidence="6 13 15">
    <location>
        <position position="25"/>
    </location>
</feature>
<feature type="modified residue" description="Phosphothreonine" evidence="6">
    <location>
        <position position="30"/>
    </location>
</feature>
<feature type="modified residue" description="Phosphoserine" evidence="6">
    <location>
        <position position="33"/>
    </location>
</feature>
<feature type="modified residue" description="Phosphothreonine" evidence="6 16">
    <location>
        <position position="37"/>
    </location>
</feature>
<feature type="modified residue" description="Phosphothreonine; by CDK14" evidence="6">
    <location>
        <position position="67"/>
    </location>
</feature>
<feature type="modified residue" description="Phosphoserine; by CDK14" evidence="6">
    <location>
        <position position="71"/>
    </location>
</feature>
<feature type="modified residue" description="Phosphoserine; by CDK14" evidence="6">
    <location>
        <position position="73"/>
    </location>
</feature>
<feature type="modified residue" description="Phosphothreonine" evidence="6">
    <location>
        <position position="75"/>
    </location>
</feature>
<feature type="modified residue" description="Phosphoserine; by CDK14" evidence="6 15">
    <location>
        <position position="83"/>
    </location>
</feature>
<feature type="modified residue" description="Phosphoserine" evidence="6">
    <location>
        <position position="99"/>
    </location>
</feature>
<feature type="modified residue" description="Phosphoserine" evidence="6">
    <location>
        <position position="100"/>
    </location>
</feature>
<feature type="modified residue" description="Phosphoserine" evidence="6">
    <location>
        <position position="102"/>
    </location>
</feature>
<feature type="modified residue" description="Phosphoserine" evidence="1">
    <location>
        <position position="280"/>
    </location>
</feature>
<feature type="modified residue" description="Phosphoserine; by CDK14" evidence="6">
    <location>
        <position position="288"/>
    </location>
</feature>
<feature type="modified residue" description="Phosphoserine; by CDK14" evidence="6">
    <location>
        <position position="295"/>
    </location>
</feature>
<feature type="modified residue" description="Phosphoserine" evidence="6">
    <location>
        <position position="324"/>
    </location>
</feature>
<feature type="modified residue" description="Phosphoserine" evidence="5 6 14 15 16">
    <location>
        <position position="326"/>
    </location>
</feature>
<feature type="modified residue" description="Phosphothreonine" evidence="15 16">
    <location>
        <position position="331"/>
    </location>
</feature>
<feature type="lipid moiety-binding region" description="N-myristoyl glycine" evidence="3 4">
    <location>
        <position position="2"/>
    </location>
</feature>
<feature type="splice variant" id="VSP_014833" description="In isoform 3." evidence="8 9 10">
    <location>
        <begin position="1"/>
        <end position="54"/>
    </location>
</feature>
<feature type="splice variant" id="VSP_014834" description="In isoform 2." evidence="11">
    <location>
        <begin position="52"/>
        <end position="76"/>
    </location>
</feature>
<feature type="mutagenesis site" description="Induces a diffuse cytoplasmic localization." evidence="3 4">
    <original>G</original>
    <variation>A</variation>
    <location>
        <position position="2"/>
    </location>
</feature>
<feature type="mutagenesis site" description="No effect on subcellular location." evidence="3">
    <original>N</original>
    <variation>A</variation>
    <location>
        <position position="3"/>
    </location>
</feature>
<feature type="sequence conflict" description="In Ref. 4; AAL78998." evidence="12" ref="4">
    <original>R</original>
    <variation>G</variation>
    <location>
        <position position="78"/>
    </location>
</feature>
<feature type="sequence conflict" description="In Ref. 4; AAL78999." evidence="12" ref="4">
    <original>Y</original>
    <variation>H</variation>
    <location>
        <position position="118"/>
    </location>
</feature>
<feature type="sequence conflict" description="In Ref. 1; AAS79427 and 3; AAL07802." evidence="12" ref="1 3">
    <original>S</original>
    <variation>C</variation>
    <location>
        <position position="155"/>
    </location>
</feature>
<feature type="sequence conflict" description="In Ref. 1; AAS79427 and 3; AAL07802." evidence="12" ref="1 3">
    <original>I</original>
    <variation>M</variation>
    <location>
        <position position="171"/>
    </location>
</feature>
<feature type="sequence conflict" description="In Ref. 5; BAB71409." evidence="12" ref="5">
    <original>I</original>
    <variation>V</variation>
    <location>
        <position position="190"/>
    </location>
</feature>
<feature type="sequence conflict" description="In Ref. 1; AAS79427 and 3; AAL07802." evidence="12" ref="1 3">
    <original>V</original>
    <variation>A</variation>
    <location>
        <position position="216"/>
    </location>
</feature>
<feature type="sequence conflict" description="In Ref. 5; BAB71409." evidence="12" ref="5">
    <original>N</original>
    <variation>S</variation>
    <location>
        <position position="250"/>
    </location>
</feature>
<feature type="sequence conflict" description="In Ref. 1; AAS79427 and 3; AAL07802." evidence="12" ref="1 3">
    <original>S</original>
    <variation>F</variation>
    <location>
        <position position="268"/>
    </location>
</feature>
<name>CCNY_HUMAN</name>
<sequence>MGNTTSCCVSSSPKLRRNAHSRLESYRPDTDLSREDTGCNLQHISDRENIDDLNMEFNPSDHPRASTIFLSKSQTDVREKRKSLFINHHPPGQIARKYSSCSTIFLDDSTVSQPNLKYTIKCVALAIYYHIKNRDPDGRMLLDIFDENLHPLSKSEVPPDYDKHNPEQKQIYRFVRTLFSAAQLTAECAIVTLVYLERLLTYAEIDICPANWKRIVLGAILLASKVWDDQAVWNVDYCQILKDITVEDMNELERQFLELLQFNINVPSSVYAKYYFDLRSLAEANNLSFPLEPLSRERAHKLEAISRLCEDKYKDLRRSARKRSASADNLTLPRWSPAIIS</sequence>
<accession>Q8ND76</accession>
<accession>B7ZKX9</accession>
<accession>D3DRY9</accession>
<accession>Q2M3V4</accession>
<accession>Q2TU96</accession>
<accession>Q6NT86</accession>
<accession>Q7Z4U7</accession>
<accession>Q8TEX2</accession>
<accession>Q8TEX3</accession>
<accession>Q96M99</accession>
<accession>Q96P45</accession>
<reference key="1">
    <citation type="journal article" date="2009" name="FEBS Lett.">
        <title>Cyclin Y, a novel membrane-associated cyclin, interacts with PFTK1.</title>
        <authorList>
            <person name="Jiang M."/>
            <person name="Gao Y."/>
            <person name="Yang T."/>
            <person name="Zhu X."/>
            <person name="Chen J."/>
        </authorList>
    </citation>
    <scope>NUCLEOTIDE SEQUENCE [MRNA] (ISOFORM 1)</scope>
    <scope>FUNCTION</scope>
    <scope>SUBCELLULAR LOCATION</scope>
    <scope>INTERACTION WITH CDK14</scope>
    <scope>MYRISTOYLATION AT GLY-2</scope>
    <scope>MUTAGENESIS OF GLY-2 AND ASN-3</scope>
</reference>
<reference key="2">
    <citation type="journal article" date="2009" name="Mol. Biol. Rep.">
        <title>Identification and characterization of cyclin X which activates transcriptional activities of c-Myc.</title>
        <authorList>
            <person name="Li X."/>
            <person name="Wang X."/>
            <person name="Liu G."/>
            <person name="Li R."/>
            <person name="Yu L."/>
        </authorList>
    </citation>
    <scope>NUCLEOTIDE SEQUENCE [LARGE SCALE MRNA] (ISOFORM 3)</scope>
    <scope>FUNCTION</scope>
    <scope>SUBCELLULAR LOCATION</scope>
    <scope>TISSUE SPECIFICITY</scope>
    <source>
        <tissue>Testis</tissue>
    </source>
</reference>
<reference key="3">
    <citation type="submission" date="2001-08" db="EMBL/GenBank/DDBJ databases">
        <title>Identification and characterization of CBCP1, a novel gene located on human chromosome 10.</title>
        <authorList>
            <person name="Gong L."/>
            <person name="Wu K."/>
        </authorList>
    </citation>
    <scope>NUCLEOTIDE SEQUENCE [MRNA] (ISOFORM 1)</scope>
</reference>
<reference key="4">
    <citation type="submission" date="2002-01" db="EMBL/GenBank/DDBJ databases">
        <title>Human cyclin fold protein 1.</title>
        <authorList>
            <person name="Shannon M."/>
        </authorList>
    </citation>
    <scope>NUCLEOTIDE SEQUENCE [MRNA] (ISOFORMS 1 AND 2)</scope>
</reference>
<reference key="5">
    <citation type="journal article" date="2004" name="Nat. Genet.">
        <title>Complete sequencing and characterization of 21,243 full-length human cDNAs.</title>
        <authorList>
            <person name="Ota T."/>
            <person name="Suzuki Y."/>
            <person name="Nishikawa T."/>
            <person name="Otsuki T."/>
            <person name="Sugiyama T."/>
            <person name="Irie R."/>
            <person name="Wakamatsu A."/>
            <person name="Hayashi K."/>
            <person name="Sato H."/>
            <person name="Nagai K."/>
            <person name="Kimura K."/>
            <person name="Makita H."/>
            <person name="Sekine M."/>
            <person name="Obayashi M."/>
            <person name="Nishi T."/>
            <person name="Shibahara T."/>
            <person name="Tanaka T."/>
            <person name="Ishii S."/>
            <person name="Yamamoto J."/>
            <person name="Saito K."/>
            <person name="Kawai Y."/>
            <person name="Isono Y."/>
            <person name="Nakamura Y."/>
            <person name="Nagahari K."/>
            <person name="Murakami K."/>
            <person name="Yasuda T."/>
            <person name="Iwayanagi T."/>
            <person name="Wagatsuma M."/>
            <person name="Shiratori A."/>
            <person name="Sudo H."/>
            <person name="Hosoiri T."/>
            <person name="Kaku Y."/>
            <person name="Kodaira H."/>
            <person name="Kondo H."/>
            <person name="Sugawara M."/>
            <person name="Takahashi M."/>
            <person name="Kanda K."/>
            <person name="Yokoi T."/>
            <person name="Furuya T."/>
            <person name="Kikkawa E."/>
            <person name="Omura Y."/>
            <person name="Abe K."/>
            <person name="Kamihara K."/>
            <person name="Katsuta N."/>
            <person name="Sato K."/>
            <person name="Tanikawa M."/>
            <person name="Yamazaki M."/>
            <person name="Ninomiya K."/>
            <person name="Ishibashi T."/>
            <person name="Yamashita H."/>
            <person name="Murakawa K."/>
            <person name="Fujimori K."/>
            <person name="Tanai H."/>
            <person name="Kimata M."/>
            <person name="Watanabe M."/>
            <person name="Hiraoka S."/>
            <person name="Chiba Y."/>
            <person name="Ishida S."/>
            <person name="Ono Y."/>
            <person name="Takiguchi S."/>
            <person name="Watanabe S."/>
            <person name="Yosida M."/>
            <person name="Hotuta T."/>
            <person name="Kusano J."/>
            <person name="Kanehori K."/>
            <person name="Takahashi-Fujii A."/>
            <person name="Hara H."/>
            <person name="Tanase T.-O."/>
            <person name="Nomura Y."/>
            <person name="Togiya S."/>
            <person name="Komai F."/>
            <person name="Hara R."/>
            <person name="Takeuchi K."/>
            <person name="Arita M."/>
            <person name="Imose N."/>
            <person name="Musashino K."/>
            <person name="Yuuki H."/>
            <person name="Oshima A."/>
            <person name="Sasaki N."/>
            <person name="Aotsuka S."/>
            <person name="Yoshikawa Y."/>
            <person name="Matsunawa H."/>
            <person name="Ichihara T."/>
            <person name="Shiohata N."/>
            <person name="Sano S."/>
            <person name="Moriya S."/>
            <person name="Momiyama H."/>
            <person name="Satoh N."/>
            <person name="Takami S."/>
            <person name="Terashima Y."/>
            <person name="Suzuki O."/>
            <person name="Nakagawa S."/>
            <person name="Senoh A."/>
            <person name="Mizoguchi H."/>
            <person name="Goto Y."/>
            <person name="Shimizu F."/>
            <person name="Wakebe H."/>
            <person name="Hishigaki H."/>
            <person name="Watanabe T."/>
            <person name="Sugiyama A."/>
            <person name="Takemoto M."/>
            <person name="Kawakami B."/>
            <person name="Yamazaki M."/>
            <person name="Watanabe K."/>
            <person name="Kumagai A."/>
            <person name="Itakura S."/>
            <person name="Fukuzumi Y."/>
            <person name="Fujimori Y."/>
            <person name="Komiyama M."/>
            <person name="Tashiro H."/>
            <person name="Tanigami A."/>
            <person name="Fujiwara T."/>
            <person name="Ono T."/>
            <person name="Yamada K."/>
            <person name="Fujii Y."/>
            <person name="Ozaki K."/>
            <person name="Hirao M."/>
            <person name="Ohmori Y."/>
            <person name="Kawabata A."/>
            <person name="Hikiji T."/>
            <person name="Kobatake N."/>
            <person name="Inagaki H."/>
            <person name="Ikema Y."/>
            <person name="Okamoto S."/>
            <person name="Okitani R."/>
            <person name="Kawakami T."/>
            <person name="Noguchi S."/>
            <person name="Itoh T."/>
            <person name="Shigeta K."/>
            <person name="Senba T."/>
            <person name="Matsumura K."/>
            <person name="Nakajima Y."/>
            <person name="Mizuno T."/>
            <person name="Morinaga M."/>
            <person name="Sasaki M."/>
            <person name="Togashi T."/>
            <person name="Oyama M."/>
            <person name="Hata H."/>
            <person name="Watanabe M."/>
            <person name="Komatsu T."/>
            <person name="Mizushima-Sugano J."/>
            <person name="Satoh T."/>
            <person name="Shirai Y."/>
            <person name="Takahashi Y."/>
            <person name="Nakagawa K."/>
            <person name="Okumura K."/>
            <person name="Nagase T."/>
            <person name="Nomura N."/>
            <person name="Kikuchi H."/>
            <person name="Masuho Y."/>
            <person name="Yamashita R."/>
            <person name="Nakai K."/>
            <person name="Yada T."/>
            <person name="Nakamura Y."/>
            <person name="Ohara O."/>
            <person name="Isogai T."/>
            <person name="Sugano S."/>
        </authorList>
    </citation>
    <scope>NUCLEOTIDE SEQUENCE [LARGE SCALE MRNA] (ISOFORM 3)</scope>
    <source>
        <tissue>Testis</tissue>
    </source>
</reference>
<reference key="6">
    <citation type="journal article" date="2007" name="BMC Genomics">
        <title>The full-ORF clone resource of the German cDNA consortium.</title>
        <authorList>
            <person name="Bechtel S."/>
            <person name="Rosenfelder H."/>
            <person name="Duda A."/>
            <person name="Schmidt C.P."/>
            <person name="Ernst U."/>
            <person name="Wellenreuther R."/>
            <person name="Mehrle A."/>
            <person name="Schuster C."/>
            <person name="Bahr A."/>
            <person name="Bloecker H."/>
            <person name="Heubner D."/>
            <person name="Hoerlein A."/>
            <person name="Michel G."/>
            <person name="Wedler H."/>
            <person name="Koehrer K."/>
            <person name="Ottenwaelder B."/>
            <person name="Poustka A."/>
            <person name="Wiemann S."/>
            <person name="Schupp I."/>
        </authorList>
    </citation>
    <scope>NUCLEOTIDE SEQUENCE [LARGE SCALE MRNA] (ISOFORM 1)</scope>
    <source>
        <tissue>Brain</tissue>
    </source>
</reference>
<reference key="7">
    <citation type="journal article" date="2004" name="Nature">
        <title>The DNA sequence and comparative analysis of human chromosome 10.</title>
        <authorList>
            <person name="Deloukas P."/>
            <person name="Earthrowl M.E."/>
            <person name="Grafham D.V."/>
            <person name="Rubenfield M."/>
            <person name="French L."/>
            <person name="Steward C.A."/>
            <person name="Sims S.K."/>
            <person name="Jones M.C."/>
            <person name="Searle S."/>
            <person name="Scott C."/>
            <person name="Howe K."/>
            <person name="Hunt S.E."/>
            <person name="Andrews T.D."/>
            <person name="Gilbert J.G.R."/>
            <person name="Swarbreck D."/>
            <person name="Ashurst J.L."/>
            <person name="Taylor A."/>
            <person name="Battles J."/>
            <person name="Bird C.P."/>
            <person name="Ainscough R."/>
            <person name="Almeida J.P."/>
            <person name="Ashwell R.I.S."/>
            <person name="Ambrose K.D."/>
            <person name="Babbage A.K."/>
            <person name="Bagguley C.L."/>
            <person name="Bailey J."/>
            <person name="Banerjee R."/>
            <person name="Bates K."/>
            <person name="Beasley H."/>
            <person name="Bray-Allen S."/>
            <person name="Brown A.J."/>
            <person name="Brown J.Y."/>
            <person name="Burford D.C."/>
            <person name="Burrill W."/>
            <person name="Burton J."/>
            <person name="Cahill P."/>
            <person name="Camire D."/>
            <person name="Carter N.P."/>
            <person name="Chapman J.C."/>
            <person name="Clark S.Y."/>
            <person name="Clarke G."/>
            <person name="Clee C.M."/>
            <person name="Clegg S."/>
            <person name="Corby N."/>
            <person name="Coulson A."/>
            <person name="Dhami P."/>
            <person name="Dutta I."/>
            <person name="Dunn M."/>
            <person name="Faulkner L."/>
            <person name="Frankish A."/>
            <person name="Frankland J.A."/>
            <person name="Garner P."/>
            <person name="Garnett J."/>
            <person name="Gribble S."/>
            <person name="Griffiths C."/>
            <person name="Grocock R."/>
            <person name="Gustafson E."/>
            <person name="Hammond S."/>
            <person name="Harley J.L."/>
            <person name="Hart E."/>
            <person name="Heath P.D."/>
            <person name="Ho T.P."/>
            <person name="Hopkins B."/>
            <person name="Horne J."/>
            <person name="Howden P.J."/>
            <person name="Huckle E."/>
            <person name="Hynds C."/>
            <person name="Johnson C."/>
            <person name="Johnson D."/>
            <person name="Kana A."/>
            <person name="Kay M."/>
            <person name="Kimberley A.M."/>
            <person name="Kershaw J.K."/>
            <person name="Kokkinaki M."/>
            <person name="Laird G.K."/>
            <person name="Lawlor S."/>
            <person name="Lee H.M."/>
            <person name="Leongamornlert D.A."/>
            <person name="Laird G."/>
            <person name="Lloyd C."/>
            <person name="Lloyd D.M."/>
            <person name="Loveland J."/>
            <person name="Lovell J."/>
            <person name="McLaren S."/>
            <person name="McLay K.E."/>
            <person name="McMurray A."/>
            <person name="Mashreghi-Mohammadi M."/>
            <person name="Matthews L."/>
            <person name="Milne S."/>
            <person name="Nickerson T."/>
            <person name="Nguyen M."/>
            <person name="Overton-Larty E."/>
            <person name="Palmer S.A."/>
            <person name="Pearce A.V."/>
            <person name="Peck A.I."/>
            <person name="Pelan S."/>
            <person name="Phillimore B."/>
            <person name="Porter K."/>
            <person name="Rice C.M."/>
            <person name="Rogosin A."/>
            <person name="Ross M.T."/>
            <person name="Sarafidou T."/>
            <person name="Sehra H.K."/>
            <person name="Shownkeen R."/>
            <person name="Skuce C.D."/>
            <person name="Smith M."/>
            <person name="Standring L."/>
            <person name="Sycamore N."/>
            <person name="Tester J."/>
            <person name="Thorpe A."/>
            <person name="Torcasso W."/>
            <person name="Tracey A."/>
            <person name="Tromans A."/>
            <person name="Tsolas J."/>
            <person name="Wall M."/>
            <person name="Walsh J."/>
            <person name="Wang H."/>
            <person name="Weinstock K."/>
            <person name="West A.P."/>
            <person name="Willey D.L."/>
            <person name="Whitehead S.L."/>
            <person name="Wilming L."/>
            <person name="Wray P.W."/>
            <person name="Young L."/>
            <person name="Chen Y."/>
            <person name="Lovering R.C."/>
            <person name="Moschonas N.K."/>
            <person name="Siebert R."/>
            <person name="Fechtel K."/>
            <person name="Bentley D."/>
            <person name="Durbin R.M."/>
            <person name="Hubbard T."/>
            <person name="Doucette-Stamm L."/>
            <person name="Beck S."/>
            <person name="Smith D.R."/>
            <person name="Rogers J."/>
        </authorList>
    </citation>
    <scope>NUCLEOTIDE SEQUENCE [LARGE SCALE GENOMIC DNA]</scope>
</reference>
<reference key="8">
    <citation type="submission" date="2005-09" db="EMBL/GenBank/DDBJ databases">
        <authorList>
            <person name="Mural R.J."/>
            <person name="Istrail S."/>
            <person name="Sutton G.G."/>
            <person name="Florea L."/>
            <person name="Halpern A.L."/>
            <person name="Mobarry C.M."/>
            <person name="Lippert R."/>
            <person name="Walenz B."/>
            <person name="Shatkay H."/>
            <person name="Dew I."/>
            <person name="Miller J.R."/>
            <person name="Flanigan M.J."/>
            <person name="Edwards N.J."/>
            <person name="Bolanos R."/>
            <person name="Fasulo D."/>
            <person name="Halldorsson B.V."/>
            <person name="Hannenhalli S."/>
            <person name="Turner R."/>
            <person name="Yooseph S."/>
            <person name="Lu F."/>
            <person name="Nusskern D.R."/>
            <person name="Shue B.C."/>
            <person name="Zheng X.H."/>
            <person name="Zhong F."/>
            <person name="Delcher A.L."/>
            <person name="Huson D.H."/>
            <person name="Kravitz S.A."/>
            <person name="Mouchard L."/>
            <person name="Reinert K."/>
            <person name="Remington K.A."/>
            <person name="Clark A.G."/>
            <person name="Waterman M.S."/>
            <person name="Eichler E.E."/>
            <person name="Adams M.D."/>
            <person name="Hunkapiller M.W."/>
            <person name="Myers E.W."/>
            <person name="Venter J.C."/>
        </authorList>
    </citation>
    <scope>NUCLEOTIDE SEQUENCE [LARGE SCALE GENOMIC DNA]</scope>
</reference>
<reference key="9">
    <citation type="journal article" date="2004" name="Genome Res.">
        <title>The status, quality, and expansion of the NIH full-length cDNA project: the Mammalian Gene Collection (MGC).</title>
        <authorList>
            <consortium name="The MGC Project Team"/>
        </authorList>
    </citation>
    <scope>NUCLEOTIDE SEQUENCE [LARGE SCALE MRNA] (ISOFORMS 1 AND 3)</scope>
    <source>
        <tissue>Brain</tissue>
        <tissue>Cerebellum</tissue>
        <tissue>Neuroblastoma</tissue>
        <tissue>Testis</tissue>
    </source>
</reference>
<reference key="10">
    <citation type="journal article" date="2006" name="Cell">
        <title>Global, in vivo, and site-specific phosphorylation dynamics in signaling networks.</title>
        <authorList>
            <person name="Olsen J.V."/>
            <person name="Blagoev B."/>
            <person name="Gnad F."/>
            <person name="Macek B."/>
            <person name="Kumar C."/>
            <person name="Mortensen P."/>
            <person name="Mann M."/>
        </authorList>
    </citation>
    <scope>IDENTIFICATION BY MASS SPECTROMETRY [LARGE SCALE ANALYSIS]</scope>
    <source>
        <tissue>Cervix carcinoma</tissue>
    </source>
</reference>
<reference key="11">
    <citation type="journal article" date="2008" name="J. Proteome Res.">
        <title>Phosphorylation analysis of primary human T lymphocytes using sequential IMAC and titanium oxide enrichment.</title>
        <authorList>
            <person name="Carrascal M."/>
            <person name="Ovelleiro D."/>
            <person name="Casas V."/>
            <person name="Gay M."/>
            <person name="Abian J."/>
        </authorList>
    </citation>
    <scope>IDENTIFICATION BY MASS SPECTROMETRY [LARGE SCALE ANALYSIS]</scope>
    <source>
        <tissue>T-cell</tissue>
    </source>
</reference>
<reference key="12">
    <citation type="journal article" date="2008" name="J. Proteome Res.">
        <title>Phosphoproteome of resting human platelets.</title>
        <authorList>
            <person name="Zahedi R.P."/>
            <person name="Lewandrowski U."/>
            <person name="Wiesner J."/>
            <person name="Wortelkamp S."/>
            <person name="Moebius J."/>
            <person name="Schuetz C."/>
            <person name="Walter U."/>
            <person name="Gambaryan S."/>
            <person name="Sickmann A."/>
        </authorList>
    </citation>
    <scope>IDENTIFICATION BY MASS SPECTROMETRY [LARGE SCALE ANALYSIS]</scope>
    <source>
        <tissue>Platelet</tissue>
    </source>
</reference>
<reference key="13">
    <citation type="journal article" date="2008" name="Proc. Natl. Acad. Sci. U.S.A.">
        <title>A quantitative atlas of mitotic phosphorylation.</title>
        <authorList>
            <person name="Dephoure N."/>
            <person name="Zhou C."/>
            <person name="Villen J."/>
            <person name="Beausoleil S.A."/>
            <person name="Bakalarski C.E."/>
            <person name="Elledge S.J."/>
            <person name="Gygi S.P."/>
        </authorList>
    </citation>
    <scope>PHOSPHORYLATION [LARGE SCALE ANALYSIS] AT SER-25</scope>
    <scope>IDENTIFICATION BY MASS SPECTROMETRY [LARGE SCALE ANALYSIS]</scope>
    <source>
        <tissue>Cervix carcinoma</tissue>
    </source>
</reference>
<reference key="14">
    <citation type="journal article" date="2009" name="Dev. Cell">
        <title>Cell cycle control of wnt receptor activation.</title>
        <authorList>
            <person name="Davidson G."/>
            <person name="Shen J."/>
            <person name="Huang Y.L."/>
            <person name="Su Y."/>
            <person name="Karaulanov E."/>
            <person name="Bartscherer K."/>
            <person name="Hassler C."/>
            <person name="Stannek P."/>
            <person name="Boutros M."/>
            <person name="Niehrs C."/>
        </authorList>
    </citation>
    <scope>FUNCTION</scope>
    <scope>SUBCELLULAR LOCATION</scope>
    <scope>DEVELOPMENTAL STAGE</scope>
    <scope>INTERACTION WITH CDK14 AND LRP6</scope>
    <scope>UBIQUITINATION</scope>
    <scope>MYRISTOYLATION AT GLY-2</scope>
    <scope>MUTAGENESIS OF GLY-2</scope>
</reference>
<reference key="15">
    <citation type="journal article" date="2009" name="Mol. Cell. Proteomics">
        <title>Large-scale proteomics analysis of the human kinome.</title>
        <authorList>
            <person name="Oppermann F.S."/>
            <person name="Gnad F."/>
            <person name="Olsen J.V."/>
            <person name="Hornberger R."/>
            <person name="Greff Z."/>
            <person name="Keri G."/>
            <person name="Mann M."/>
            <person name="Daub H."/>
        </authorList>
    </citation>
    <scope>IDENTIFICATION BY MASS SPECTROMETRY [LARGE SCALE ANALYSIS]</scope>
</reference>
<reference key="16">
    <citation type="journal article" date="2010" name="Sci. Signal.">
        <title>Quantitative phosphoproteomics reveals widespread full phosphorylation site occupancy during mitosis.</title>
        <authorList>
            <person name="Olsen J.V."/>
            <person name="Vermeulen M."/>
            <person name="Santamaria A."/>
            <person name="Kumar C."/>
            <person name="Miller M.L."/>
            <person name="Jensen L.J."/>
            <person name="Gnad F."/>
            <person name="Cox J."/>
            <person name="Jensen T.S."/>
            <person name="Nigg E.A."/>
            <person name="Brunak S."/>
            <person name="Mann M."/>
        </authorList>
    </citation>
    <scope>IDENTIFICATION BY MASS SPECTROMETRY [LARGE SCALE ANALYSIS]</scope>
    <source>
        <tissue>Cervix carcinoma</tissue>
    </source>
</reference>
<reference key="17">
    <citation type="journal article" date="2011" name="Sci. Signal.">
        <title>System-wide temporal characterization of the proteome and phosphoproteome of human embryonic stem cell differentiation.</title>
        <authorList>
            <person name="Rigbolt K.T."/>
            <person name="Prokhorova T.A."/>
            <person name="Akimov V."/>
            <person name="Henningsen J."/>
            <person name="Johansen P.T."/>
            <person name="Kratchmarova I."/>
            <person name="Kassem M."/>
            <person name="Mann M."/>
            <person name="Olsen J.V."/>
            <person name="Blagoev B."/>
        </authorList>
    </citation>
    <scope>PHOSPHORYLATION [LARGE SCALE ANALYSIS] AT SER-326</scope>
    <scope>IDENTIFICATION BY MASS SPECTROMETRY [LARGE SCALE ANALYSIS]</scope>
</reference>
<reference key="18">
    <citation type="journal article" date="2012" name="Mol. Cell. Biol.">
        <title>Cyclin-dependent kinase 16/PCTAIRE kinase 1 is activated by cyclin Y and is essential for spermatogenesis.</title>
        <authorList>
            <person name="Mikolcevic P."/>
            <person name="Sigl R."/>
            <person name="Rauch V."/>
            <person name="Hess M.W."/>
            <person name="Pfaller K."/>
            <person name="Barisic M."/>
            <person name="Pelliniemi L.J."/>
            <person name="Boesl M."/>
            <person name="Geley S."/>
        </authorList>
    </citation>
    <scope>FUNCTION</scope>
    <scope>SUBCELLULAR LOCATION</scope>
    <scope>INTERACTION WITH CDK16</scope>
    <scope>PHOSPHORYLATION AT SER-326</scope>
</reference>
<reference key="19">
    <citation type="journal article" date="2013" name="J. Proteome Res.">
        <title>Toward a comprehensive characterization of a human cancer cell phosphoproteome.</title>
        <authorList>
            <person name="Zhou H."/>
            <person name="Di Palma S."/>
            <person name="Preisinger C."/>
            <person name="Peng M."/>
            <person name="Polat A.N."/>
            <person name="Heck A.J."/>
            <person name="Mohammed S."/>
        </authorList>
    </citation>
    <scope>PHOSPHORYLATION [LARGE SCALE ANALYSIS] AT SER-21; SER-25; SER-83; SER-326 AND THR-331</scope>
    <scope>IDENTIFICATION BY MASS SPECTROMETRY [LARGE SCALE ANALYSIS]</scope>
    <source>
        <tissue>Cervix carcinoma</tissue>
        <tissue>Erythroleukemia</tissue>
    </source>
</reference>
<reference key="20">
    <citation type="journal article" date="2014" name="FEBS Lett.">
        <title>Phosphorylation of cyclin Y by CDK14 induces its ubiquitination and degradation.</title>
        <authorList>
            <person name="Li S."/>
            <person name="Song W."/>
            <person name="Jiang M."/>
            <person name="Zeng L."/>
            <person name="Zhu X."/>
            <person name="Chen J."/>
        </authorList>
    </citation>
    <scope>PHOSPHORYLATION AT SER-25; THR-30; SER-33; THR-37; THR-67; SER-71; SER-73; THR-75; SER-83; SER-99; SER-100; SER-102; SER-288; SER-295; SER-324 AND SER-326</scope>
    <scope>UBIQUITINATION</scope>
</reference>
<reference key="21">
    <citation type="journal article" date="2014" name="J. Proteomics">
        <title>An enzyme assisted RP-RPLC approach for in-depth analysis of human liver phosphoproteome.</title>
        <authorList>
            <person name="Bian Y."/>
            <person name="Song C."/>
            <person name="Cheng K."/>
            <person name="Dong M."/>
            <person name="Wang F."/>
            <person name="Huang J."/>
            <person name="Sun D."/>
            <person name="Wang L."/>
            <person name="Ye M."/>
            <person name="Zou H."/>
        </authorList>
    </citation>
    <scope>PHOSPHORYLATION [LARGE SCALE ANALYSIS] AT THR-37; SER-326 AND THR-331</scope>
    <scope>IDENTIFICATION BY MASS SPECTROMETRY [LARGE SCALE ANALYSIS]</scope>
    <source>
        <tissue>Liver</tissue>
    </source>
</reference>
<reference key="22">
    <citation type="journal article" date="2016" name="J. Biol. Chem.">
        <title>Caprin-2 positively regulates CDK14/Cyclin Y-mediated LRP5/6 constitutive phosphorylation.</title>
        <authorList>
            <person name="Wang X."/>
            <person name="Jia Y."/>
            <person name="Fei C."/>
            <person name="Song X."/>
            <person name="Li L."/>
        </authorList>
    </citation>
    <scope>IDENTIFICATION IN A COMPLEX WITH CAPRIN2; LRP6 AND CDK14</scope>
</reference>
<gene>
    <name type="primary">CCNY</name>
    <name type="synonym">C10orf9</name>
    <name type="synonym">CBCP1</name>
    <name type="synonym">CFP1</name>
</gene>